<organism>
    <name type="scientific">Shigella dysenteriae serotype 1 (strain Sd197)</name>
    <dbReference type="NCBI Taxonomy" id="300267"/>
    <lineage>
        <taxon>Bacteria</taxon>
        <taxon>Pseudomonadati</taxon>
        <taxon>Pseudomonadota</taxon>
        <taxon>Gammaproteobacteria</taxon>
        <taxon>Enterobacterales</taxon>
        <taxon>Enterobacteriaceae</taxon>
        <taxon>Shigella</taxon>
    </lineage>
</organism>
<comment type="function">
    <text evidence="1">One of the primary rRNA binding proteins, this protein initially binds near the 5'-end of the 23S rRNA. It is important during the early stages of 50S assembly. It makes multiple contacts with different domains of the 23S rRNA in the assembled 50S subunit and ribosome.</text>
</comment>
<comment type="function">
    <text evidence="1">Forms part of the polypeptide exit tunnel.</text>
</comment>
<comment type="subunit">
    <text evidence="1">Part of the 50S ribosomal subunit.</text>
</comment>
<comment type="similarity">
    <text evidence="1">Belongs to the universal ribosomal protein uL4 family.</text>
</comment>
<keyword id="KW-1185">Reference proteome</keyword>
<keyword id="KW-0687">Ribonucleoprotein</keyword>
<keyword id="KW-0689">Ribosomal protein</keyword>
<keyword id="KW-0694">RNA-binding</keyword>
<keyword id="KW-0699">rRNA-binding</keyword>
<gene>
    <name evidence="1" type="primary">rplD</name>
    <name type="ordered locus">SDY_3495</name>
</gene>
<reference key="1">
    <citation type="journal article" date="2005" name="Nucleic Acids Res.">
        <title>Genome dynamics and diversity of Shigella species, the etiologic agents of bacillary dysentery.</title>
        <authorList>
            <person name="Yang F."/>
            <person name="Yang J."/>
            <person name="Zhang X."/>
            <person name="Chen L."/>
            <person name="Jiang Y."/>
            <person name="Yan Y."/>
            <person name="Tang X."/>
            <person name="Wang J."/>
            <person name="Xiong Z."/>
            <person name="Dong J."/>
            <person name="Xue Y."/>
            <person name="Zhu Y."/>
            <person name="Xu X."/>
            <person name="Sun L."/>
            <person name="Chen S."/>
            <person name="Nie H."/>
            <person name="Peng J."/>
            <person name="Xu J."/>
            <person name="Wang Y."/>
            <person name="Yuan Z."/>
            <person name="Wen Y."/>
            <person name="Yao Z."/>
            <person name="Shen Y."/>
            <person name="Qiang B."/>
            <person name="Hou Y."/>
            <person name="Yu J."/>
            <person name="Jin Q."/>
        </authorList>
    </citation>
    <scope>NUCLEOTIDE SEQUENCE [LARGE SCALE GENOMIC DNA]</scope>
    <source>
        <strain>Sd197</strain>
    </source>
</reference>
<evidence type="ECO:0000255" key="1">
    <source>
        <dbReference type="HAMAP-Rule" id="MF_01328"/>
    </source>
</evidence>
<evidence type="ECO:0000256" key="2">
    <source>
        <dbReference type="SAM" id="MobiDB-lite"/>
    </source>
</evidence>
<evidence type="ECO:0000305" key="3"/>
<dbReference type="EMBL" id="CP000034">
    <property type="protein sequence ID" value="ABB63473.1"/>
    <property type="molecule type" value="Genomic_DNA"/>
</dbReference>
<dbReference type="RefSeq" id="WP_000424395.1">
    <property type="nucleotide sequence ID" value="NC_007606.1"/>
</dbReference>
<dbReference type="RefSeq" id="YP_404964.1">
    <property type="nucleotide sequence ID" value="NC_007606.1"/>
</dbReference>
<dbReference type="SMR" id="Q32B32"/>
<dbReference type="STRING" id="300267.SDY_3495"/>
<dbReference type="EnsemblBacteria" id="ABB63473">
    <property type="protein sequence ID" value="ABB63473"/>
    <property type="gene ID" value="SDY_3495"/>
</dbReference>
<dbReference type="GeneID" id="97442859"/>
<dbReference type="KEGG" id="sdy:SDY_3495"/>
<dbReference type="PATRIC" id="fig|300267.13.peg.4148"/>
<dbReference type="HOGENOM" id="CLU_041575_5_2_6"/>
<dbReference type="PRO" id="PR:Q32B32"/>
<dbReference type="Proteomes" id="UP000002716">
    <property type="component" value="Chromosome"/>
</dbReference>
<dbReference type="GO" id="GO:1990904">
    <property type="term" value="C:ribonucleoprotein complex"/>
    <property type="evidence" value="ECO:0007669"/>
    <property type="project" value="UniProtKB-KW"/>
</dbReference>
<dbReference type="GO" id="GO:0005840">
    <property type="term" value="C:ribosome"/>
    <property type="evidence" value="ECO:0007669"/>
    <property type="project" value="UniProtKB-KW"/>
</dbReference>
<dbReference type="GO" id="GO:0019843">
    <property type="term" value="F:rRNA binding"/>
    <property type="evidence" value="ECO:0007669"/>
    <property type="project" value="UniProtKB-UniRule"/>
</dbReference>
<dbReference type="GO" id="GO:0003735">
    <property type="term" value="F:structural constituent of ribosome"/>
    <property type="evidence" value="ECO:0007669"/>
    <property type="project" value="InterPro"/>
</dbReference>
<dbReference type="GO" id="GO:0006412">
    <property type="term" value="P:translation"/>
    <property type="evidence" value="ECO:0007669"/>
    <property type="project" value="UniProtKB-UniRule"/>
</dbReference>
<dbReference type="FunFam" id="3.40.1370.10:FF:000001">
    <property type="entry name" value="50S ribosomal protein L4"/>
    <property type="match status" value="1"/>
</dbReference>
<dbReference type="Gene3D" id="3.40.1370.10">
    <property type="match status" value="1"/>
</dbReference>
<dbReference type="HAMAP" id="MF_01328_B">
    <property type="entry name" value="Ribosomal_uL4_B"/>
    <property type="match status" value="1"/>
</dbReference>
<dbReference type="InterPro" id="IPR002136">
    <property type="entry name" value="Ribosomal_uL4"/>
</dbReference>
<dbReference type="InterPro" id="IPR013005">
    <property type="entry name" value="Ribosomal_uL4-like"/>
</dbReference>
<dbReference type="InterPro" id="IPR023574">
    <property type="entry name" value="Ribosomal_uL4_dom_sf"/>
</dbReference>
<dbReference type="NCBIfam" id="TIGR03953">
    <property type="entry name" value="rplD_bact"/>
    <property type="match status" value="1"/>
</dbReference>
<dbReference type="PANTHER" id="PTHR10746">
    <property type="entry name" value="50S RIBOSOMAL PROTEIN L4"/>
    <property type="match status" value="1"/>
</dbReference>
<dbReference type="PANTHER" id="PTHR10746:SF6">
    <property type="entry name" value="LARGE RIBOSOMAL SUBUNIT PROTEIN UL4M"/>
    <property type="match status" value="1"/>
</dbReference>
<dbReference type="Pfam" id="PF00573">
    <property type="entry name" value="Ribosomal_L4"/>
    <property type="match status" value="1"/>
</dbReference>
<dbReference type="SUPFAM" id="SSF52166">
    <property type="entry name" value="Ribosomal protein L4"/>
    <property type="match status" value="1"/>
</dbReference>
<proteinExistence type="inferred from homology"/>
<accession>Q32B32</accession>
<feature type="chain" id="PRO_0000242437" description="Large ribosomal subunit protein uL4">
    <location>
        <begin position="1"/>
        <end position="201"/>
    </location>
</feature>
<feature type="region of interest" description="Disordered" evidence="2">
    <location>
        <begin position="44"/>
        <end position="71"/>
    </location>
</feature>
<sequence length="201" mass="22087">MELVLKDAQSALTVSETTFGRDFNEALVHQVVVAYAAGARQGTRAQKTRAEVTGSGKKPWRQKGTGRARSGSIKSPIWRSGGVTFAARPQDHSQKVNKKMYRGALKSILSELVRQDRLIVVEKFSVEAPKTKLLAQKLKDMALEDVLIITGELDENLFLAARNLHKVDVRDATGIDPVSLIAFDKVVMTADAVKQVEEMLA</sequence>
<protein>
    <recommendedName>
        <fullName evidence="1">Large ribosomal subunit protein uL4</fullName>
    </recommendedName>
    <alternativeName>
        <fullName evidence="3">50S ribosomal protein L4</fullName>
    </alternativeName>
</protein>
<name>RL4_SHIDS</name>